<organism>
    <name type="scientific">Homo sapiens</name>
    <name type="common">Human</name>
    <dbReference type="NCBI Taxonomy" id="9606"/>
    <lineage>
        <taxon>Eukaryota</taxon>
        <taxon>Metazoa</taxon>
        <taxon>Chordata</taxon>
        <taxon>Craniata</taxon>
        <taxon>Vertebrata</taxon>
        <taxon>Euteleostomi</taxon>
        <taxon>Mammalia</taxon>
        <taxon>Eutheria</taxon>
        <taxon>Euarchontoglires</taxon>
        <taxon>Primates</taxon>
        <taxon>Haplorrhini</taxon>
        <taxon>Catarrhini</taxon>
        <taxon>Hominidae</taxon>
        <taxon>Homo</taxon>
    </lineage>
</organism>
<keyword id="KW-0007">Acetylation</keyword>
<keyword id="KW-0963">Cytoplasm</keyword>
<keyword id="KW-1015">Disulfide bond</keyword>
<keyword id="KW-0945">Host-virus interaction</keyword>
<keyword id="KW-0449">Lipoprotein</keyword>
<keyword id="KW-0472">Membrane</keyword>
<keyword id="KW-0496">Mitochondrion</keyword>
<keyword id="KW-0999">Mitochondrion inner membrane</keyword>
<keyword id="KW-0519">Myristate</keyword>
<keyword id="KW-0539">Nucleus</keyword>
<keyword id="KW-0597">Phosphoprotein</keyword>
<keyword id="KW-1267">Proteomics identification</keyword>
<keyword id="KW-1185">Reference proteome</keyword>
<keyword id="KW-0678">Repressor</keyword>
<keyword id="KW-0804">Transcription</keyword>
<keyword id="KW-0805">Transcription regulation</keyword>
<accession>Q9NX63</accession>
<name>MIC19_HUMAN</name>
<protein>
    <recommendedName>
        <fullName>MICOS complex subunit MIC19</fullName>
    </recommendedName>
    <alternativeName>
        <fullName>Coiled-coil-helix-coiled-coil-helix domain-containing protein 3</fullName>
    </alternativeName>
</protein>
<reference key="1">
    <citation type="journal article" date="2004" name="Nat. Genet.">
        <title>Complete sequencing and characterization of 21,243 full-length human cDNAs.</title>
        <authorList>
            <person name="Ota T."/>
            <person name="Suzuki Y."/>
            <person name="Nishikawa T."/>
            <person name="Otsuki T."/>
            <person name="Sugiyama T."/>
            <person name="Irie R."/>
            <person name="Wakamatsu A."/>
            <person name="Hayashi K."/>
            <person name="Sato H."/>
            <person name="Nagai K."/>
            <person name="Kimura K."/>
            <person name="Makita H."/>
            <person name="Sekine M."/>
            <person name="Obayashi M."/>
            <person name="Nishi T."/>
            <person name="Shibahara T."/>
            <person name="Tanaka T."/>
            <person name="Ishii S."/>
            <person name="Yamamoto J."/>
            <person name="Saito K."/>
            <person name="Kawai Y."/>
            <person name="Isono Y."/>
            <person name="Nakamura Y."/>
            <person name="Nagahari K."/>
            <person name="Murakami K."/>
            <person name="Yasuda T."/>
            <person name="Iwayanagi T."/>
            <person name="Wagatsuma M."/>
            <person name="Shiratori A."/>
            <person name="Sudo H."/>
            <person name="Hosoiri T."/>
            <person name="Kaku Y."/>
            <person name="Kodaira H."/>
            <person name="Kondo H."/>
            <person name="Sugawara M."/>
            <person name="Takahashi M."/>
            <person name="Kanda K."/>
            <person name="Yokoi T."/>
            <person name="Furuya T."/>
            <person name="Kikkawa E."/>
            <person name="Omura Y."/>
            <person name="Abe K."/>
            <person name="Kamihara K."/>
            <person name="Katsuta N."/>
            <person name="Sato K."/>
            <person name="Tanikawa M."/>
            <person name="Yamazaki M."/>
            <person name="Ninomiya K."/>
            <person name="Ishibashi T."/>
            <person name="Yamashita H."/>
            <person name="Murakawa K."/>
            <person name="Fujimori K."/>
            <person name="Tanai H."/>
            <person name="Kimata M."/>
            <person name="Watanabe M."/>
            <person name="Hiraoka S."/>
            <person name="Chiba Y."/>
            <person name="Ishida S."/>
            <person name="Ono Y."/>
            <person name="Takiguchi S."/>
            <person name="Watanabe S."/>
            <person name="Yosida M."/>
            <person name="Hotuta T."/>
            <person name="Kusano J."/>
            <person name="Kanehori K."/>
            <person name="Takahashi-Fujii A."/>
            <person name="Hara H."/>
            <person name="Tanase T.-O."/>
            <person name="Nomura Y."/>
            <person name="Togiya S."/>
            <person name="Komai F."/>
            <person name="Hara R."/>
            <person name="Takeuchi K."/>
            <person name="Arita M."/>
            <person name="Imose N."/>
            <person name="Musashino K."/>
            <person name="Yuuki H."/>
            <person name="Oshima A."/>
            <person name="Sasaki N."/>
            <person name="Aotsuka S."/>
            <person name="Yoshikawa Y."/>
            <person name="Matsunawa H."/>
            <person name="Ichihara T."/>
            <person name="Shiohata N."/>
            <person name="Sano S."/>
            <person name="Moriya S."/>
            <person name="Momiyama H."/>
            <person name="Satoh N."/>
            <person name="Takami S."/>
            <person name="Terashima Y."/>
            <person name="Suzuki O."/>
            <person name="Nakagawa S."/>
            <person name="Senoh A."/>
            <person name="Mizoguchi H."/>
            <person name="Goto Y."/>
            <person name="Shimizu F."/>
            <person name="Wakebe H."/>
            <person name="Hishigaki H."/>
            <person name="Watanabe T."/>
            <person name="Sugiyama A."/>
            <person name="Takemoto M."/>
            <person name="Kawakami B."/>
            <person name="Yamazaki M."/>
            <person name="Watanabe K."/>
            <person name="Kumagai A."/>
            <person name="Itakura S."/>
            <person name="Fukuzumi Y."/>
            <person name="Fujimori Y."/>
            <person name="Komiyama M."/>
            <person name="Tashiro H."/>
            <person name="Tanigami A."/>
            <person name="Fujiwara T."/>
            <person name="Ono T."/>
            <person name="Yamada K."/>
            <person name="Fujii Y."/>
            <person name="Ozaki K."/>
            <person name="Hirao M."/>
            <person name="Ohmori Y."/>
            <person name="Kawabata A."/>
            <person name="Hikiji T."/>
            <person name="Kobatake N."/>
            <person name="Inagaki H."/>
            <person name="Ikema Y."/>
            <person name="Okamoto S."/>
            <person name="Okitani R."/>
            <person name="Kawakami T."/>
            <person name="Noguchi S."/>
            <person name="Itoh T."/>
            <person name="Shigeta K."/>
            <person name="Senba T."/>
            <person name="Matsumura K."/>
            <person name="Nakajima Y."/>
            <person name="Mizuno T."/>
            <person name="Morinaga M."/>
            <person name="Sasaki M."/>
            <person name="Togashi T."/>
            <person name="Oyama M."/>
            <person name="Hata H."/>
            <person name="Watanabe M."/>
            <person name="Komatsu T."/>
            <person name="Mizushima-Sugano J."/>
            <person name="Satoh T."/>
            <person name="Shirai Y."/>
            <person name="Takahashi Y."/>
            <person name="Nakagawa K."/>
            <person name="Okumura K."/>
            <person name="Nagase T."/>
            <person name="Nomura N."/>
            <person name="Kikuchi H."/>
            <person name="Masuho Y."/>
            <person name="Yamashita R."/>
            <person name="Nakai K."/>
            <person name="Yada T."/>
            <person name="Nakamura Y."/>
            <person name="Ohara O."/>
            <person name="Isogai T."/>
            <person name="Sugano S."/>
        </authorList>
    </citation>
    <scope>NUCLEOTIDE SEQUENCE [LARGE SCALE MRNA]</scope>
</reference>
<reference key="2">
    <citation type="journal article" date="2004" name="Genome Res.">
        <title>The status, quality, and expansion of the NIH full-length cDNA project: the Mammalian Gene Collection (MGC).</title>
        <authorList>
            <consortium name="The MGC Project Team"/>
        </authorList>
    </citation>
    <scope>NUCLEOTIDE SEQUENCE [LARGE SCALE MRNA]</scope>
    <source>
        <tissue>Cervix</tissue>
        <tissue>Skin</tissue>
    </source>
</reference>
<reference key="3">
    <citation type="journal article" date="2003" name="Nature">
        <title>Proteomic characterization of the human centrosome by protein correlation profiling.</title>
        <authorList>
            <person name="Andersen J.S."/>
            <person name="Wilkinson C.J."/>
            <person name="Mayor T."/>
            <person name="Mortensen P."/>
            <person name="Nigg E.A."/>
            <person name="Mann M."/>
        </authorList>
    </citation>
    <scope>IDENTIFICATION BY MASS SPECTROMETRY</scope>
    <source>
        <tissue>Lymphoblast</tissue>
    </source>
</reference>
<reference key="4">
    <citation type="journal article" date="2008" name="Mol. Cell">
        <title>Kinase-selective enrichment enables quantitative phosphoproteomics of the kinome across the cell cycle.</title>
        <authorList>
            <person name="Daub H."/>
            <person name="Olsen J.V."/>
            <person name="Bairlein M."/>
            <person name="Gnad F."/>
            <person name="Oppermann F.S."/>
            <person name="Korner R."/>
            <person name="Greff Z."/>
            <person name="Keri G."/>
            <person name="Stemmann O."/>
            <person name="Mann M."/>
        </authorList>
    </citation>
    <scope>IDENTIFICATION BY MASS SPECTROMETRY [LARGE SCALE ANALYSIS]</scope>
    <source>
        <tissue>Cervix carcinoma</tissue>
    </source>
</reference>
<reference key="5">
    <citation type="journal article" date="2008" name="Proc. Natl. Acad. Sci. U.S.A.">
        <title>A quantitative atlas of mitotic phosphorylation.</title>
        <authorList>
            <person name="Dephoure N."/>
            <person name="Zhou C."/>
            <person name="Villen J."/>
            <person name="Beausoleil S.A."/>
            <person name="Bakalarski C.E."/>
            <person name="Elledge S.J."/>
            <person name="Gygi S.P."/>
        </authorList>
    </citation>
    <scope>PHOSPHORYLATION [LARGE SCALE ANALYSIS] AT SER-50</scope>
    <scope>IDENTIFICATION BY MASS SPECTROMETRY [LARGE SCALE ANALYSIS]</scope>
    <source>
        <tissue>Cervix carcinoma</tissue>
    </source>
</reference>
<reference key="6">
    <citation type="journal article" date="2009" name="Sci. Signal.">
        <title>Quantitative phosphoproteomic analysis of T cell receptor signaling reveals system-wide modulation of protein-protein interactions.</title>
        <authorList>
            <person name="Mayya V."/>
            <person name="Lundgren D.H."/>
            <person name="Hwang S.-I."/>
            <person name="Rezaul K."/>
            <person name="Wu L."/>
            <person name="Eng J.K."/>
            <person name="Rodionov V."/>
            <person name="Han D.K."/>
        </authorList>
    </citation>
    <scope>PHOSPHORYLATION [LARGE SCALE ANALYSIS] AT TYR-49 AND SER-50</scope>
    <scope>IDENTIFICATION BY MASS SPECTROMETRY [LARGE SCALE ANALYSIS]</scope>
    <source>
        <tissue>Leukemic T-cell</tissue>
    </source>
</reference>
<reference key="7">
    <citation type="journal article" date="2009" name="Science">
        <title>Lysine acetylation targets protein complexes and co-regulates major cellular functions.</title>
        <authorList>
            <person name="Choudhary C."/>
            <person name="Kumar C."/>
            <person name="Gnad F."/>
            <person name="Nielsen M.L."/>
            <person name="Rehman M."/>
            <person name="Walther T.C."/>
            <person name="Olsen J.V."/>
            <person name="Mann M."/>
        </authorList>
    </citation>
    <scope>ACETYLATION [LARGE SCALE ANALYSIS] AT LYS-142</scope>
    <scope>IDENTIFICATION BY MASS SPECTROMETRY [LARGE SCALE ANALYSIS]</scope>
</reference>
<reference key="8">
    <citation type="journal article" date="2010" name="Sci. Signal.">
        <title>Quantitative phosphoproteomics reveals widespread full phosphorylation site occupancy during mitosis.</title>
        <authorList>
            <person name="Olsen J.V."/>
            <person name="Vermeulen M."/>
            <person name="Santamaria A."/>
            <person name="Kumar C."/>
            <person name="Miller M.L."/>
            <person name="Jensen L.J."/>
            <person name="Gnad F."/>
            <person name="Cox J."/>
            <person name="Jensen T.S."/>
            <person name="Nigg E.A."/>
            <person name="Brunak S."/>
            <person name="Mann M."/>
        </authorList>
    </citation>
    <scope>PHOSPHORYLATION [LARGE SCALE ANALYSIS] AT SER-50</scope>
    <scope>IDENTIFICATION BY MASS SPECTROMETRY [LARGE SCALE ANALYSIS]</scope>
    <source>
        <tissue>Cervix carcinoma</tissue>
    </source>
</reference>
<reference key="9">
    <citation type="journal article" date="2011" name="BMC Syst. Biol.">
        <title>Initial characterization of the human central proteome.</title>
        <authorList>
            <person name="Burkard T.R."/>
            <person name="Planyavsky M."/>
            <person name="Kaupe I."/>
            <person name="Breitwieser F.P."/>
            <person name="Buerckstuemmer T."/>
            <person name="Bennett K.L."/>
            <person name="Superti-Furga G."/>
            <person name="Colinge J."/>
        </authorList>
    </citation>
    <scope>IDENTIFICATION BY MASS SPECTROMETRY [LARGE SCALE ANALYSIS]</scope>
</reference>
<reference key="10">
    <citation type="journal article" date="2011" name="J. Biol. Chem.">
        <title>ChChd3, an inner mitochondrial membrane protein, is essential for maintaining crista integrity and mitochondrial function.</title>
        <authorList>
            <person name="Darshi M."/>
            <person name="Mendiola V.L."/>
            <person name="Mackey M.R."/>
            <person name="Murphy A.N."/>
            <person name="Koller A."/>
            <person name="Perkins G.A."/>
            <person name="Ellisman M.H."/>
            <person name="Taylor S.S."/>
        </authorList>
    </citation>
    <scope>INTERACTION WITH IMMT AND SAMM50</scope>
</reference>
<reference key="11">
    <citation type="journal article" date="2011" name="Sci. Signal.">
        <title>System-wide temporal characterization of the proteome and phosphoproteome of human embryonic stem cell differentiation.</title>
        <authorList>
            <person name="Rigbolt K.T."/>
            <person name="Prokhorova T.A."/>
            <person name="Akimov V."/>
            <person name="Henningsen J."/>
            <person name="Johansen P.T."/>
            <person name="Kratchmarova I."/>
            <person name="Kassem M."/>
            <person name="Mann M."/>
            <person name="Olsen J.V."/>
            <person name="Blagoev B."/>
        </authorList>
    </citation>
    <scope>PHOSPHORYLATION [LARGE SCALE ANALYSIS] AT SER-50</scope>
    <scope>IDENTIFICATION BY MASS SPECTROMETRY [LARGE SCALE ANALYSIS]</scope>
</reference>
<reference key="12">
    <citation type="journal article" date="2012" name="Mol. Biol. Cell">
        <title>MINOS1 is a conserved component of mitofilin complexes and required for mitochondrial function and cristae organization.</title>
        <authorList>
            <person name="Alkhaja A.K."/>
            <person name="Jans D.C."/>
            <person name="Nikolov M."/>
            <person name="Vukotic M."/>
            <person name="Lytovchenko O."/>
            <person name="Ludewig F."/>
            <person name="Schliebs W."/>
            <person name="Riedel D."/>
            <person name="Urlaub H."/>
            <person name="Jakobs S."/>
            <person name="Deckers M."/>
        </authorList>
    </citation>
    <scope>IDENTIFICATION IN THE MICOS COMPLEX</scope>
</reference>
<reference key="13">
    <citation type="journal article" date="2012" name="J. Biol. Chem.">
        <title>CHCM1/CHCHD6, a novel mitochondrial protein linked to regulation of mitofilin and mitochondrial cristae morphology.</title>
        <authorList>
            <person name="An J."/>
            <person name="Shi J."/>
            <person name="He Q."/>
            <person name="Lui K."/>
            <person name="Liu Y."/>
            <person name="Huang Y."/>
            <person name="Sheikh M.S."/>
        </authorList>
    </citation>
    <scope>INTERACTION WITH CHCHD6</scope>
</reference>
<reference key="14">
    <citation type="journal article" date="2012" name="Mol. Cell. Biol.">
        <title>Sam50 functions in mitochondrial intermembrane space bridging and biogenesis of respiratory complexes.</title>
        <authorList>
            <person name="Ott C."/>
            <person name="Ross K."/>
            <person name="Straub S."/>
            <person name="Thiede B."/>
            <person name="Gotz M."/>
            <person name="Goosmann C."/>
            <person name="Krischke M."/>
            <person name="Mueller M.J."/>
            <person name="Krohne G."/>
            <person name="Rudel T."/>
            <person name="Kozjak-Pavlovic V."/>
        </authorList>
    </citation>
    <scope>IDENTIFICATION IN THE MICOS COMPLEX</scope>
</reference>
<reference key="15">
    <citation type="journal article" date="2012" name="PLoS ONE">
        <title>Cloning and functional analysis of FLJ20420: a novel transcription factor for the BAG-1 promoter.</title>
        <authorList>
            <person name="Liu H."/>
            <person name="Li Y."/>
            <person name="Li Y."/>
            <person name="Liu B."/>
            <person name="Wu H."/>
            <person name="Wang J."/>
            <person name="Wang Y."/>
            <person name="Wang M."/>
            <person name="Tang S.C."/>
            <person name="Zhou Q."/>
            <person name="Chen J."/>
        </authorList>
    </citation>
    <scope>FUNCTION</scope>
    <scope>SUBCELLULAR LOCATION</scope>
    <scope>TISSUE SPECIFICITY</scope>
</reference>
<reference key="16">
    <citation type="journal article" date="2013" name="J. Proteome Res.">
        <title>Toward a comprehensive characterization of a human cancer cell phosphoproteome.</title>
        <authorList>
            <person name="Zhou H."/>
            <person name="Di Palma S."/>
            <person name="Preisinger C."/>
            <person name="Peng M."/>
            <person name="Polat A.N."/>
            <person name="Heck A.J."/>
            <person name="Mohammed S."/>
        </authorList>
    </citation>
    <scope>PHOSPHORYLATION [LARGE SCALE ANALYSIS] AT SER-29; TYR-49; SER-50 AND SER-58</scope>
    <scope>IDENTIFICATION BY MASS SPECTROMETRY [LARGE SCALE ANALYSIS]</scope>
    <source>
        <tissue>Cervix carcinoma</tissue>
        <tissue>Erythroleukemia</tissue>
    </source>
</reference>
<reference key="17">
    <citation type="journal article" date="2014" name="J. Cell Biol.">
        <title>Uniform nomenclature for the mitochondrial contact site and cristae organizing system.</title>
        <authorList>
            <person name="Pfanner N."/>
            <person name="van der Laan M."/>
            <person name="Amati P."/>
            <person name="Capaldi R.A."/>
            <person name="Caudy A.A."/>
            <person name="Chacinska A."/>
            <person name="Darshi M."/>
            <person name="Deckers M."/>
            <person name="Hoppins S."/>
            <person name="Icho T."/>
            <person name="Jakobs S."/>
            <person name="Ji J."/>
            <person name="Kozjak-Pavlovic V."/>
            <person name="Meisinger C."/>
            <person name="Odgren P.R."/>
            <person name="Park S.K."/>
            <person name="Rehling P."/>
            <person name="Reichert A.S."/>
            <person name="Sheikh M.S."/>
            <person name="Taylor S.S."/>
            <person name="Tsuchida N."/>
            <person name="van der Bliek A.M."/>
            <person name="van der Klei I.J."/>
            <person name="Weissman J.S."/>
            <person name="Westermann B."/>
            <person name="Zha J."/>
            <person name="Neupert W."/>
            <person name="Nunnari J."/>
        </authorList>
    </citation>
    <scope>NOMENCLATURE</scope>
</reference>
<reference key="18">
    <citation type="journal article" date="2014" name="J. Proteomics">
        <title>An enzyme assisted RP-RPLC approach for in-depth analysis of human liver phosphoproteome.</title>
        <authorList>
            <person name="Bian Y."/>
            <person name="Song C."/>
            <person name="Cheng K."/>
            <person name="Dong M."/>
            <person name="Wang F."/>
            <person name="Huang J."/>
            <person name="Sun D."/>
            <person name="Wang L."/>
            <person name="Ye M."/>
            <person name="Zou H."/>
        </authorList>
    </citation>
    <scope>IDENTIFICATION BY MASS SPECTROMETRY [LARGE SCALE ANALYSIS]</scope>
    <source>
        <tissue>Liver</tissue>
    </source>
</reference>
<reference key="19">
    <citation type="journal article" date="2014" name="Nat. Commun.">
        <title>Global profiling of co- and post-translationally N-myristoylated proteomes in human cells.</title>
        <authorList>
            <person name="Thinon E."/>
            <person name="Serwa R.A."/>
            <person name="Broncel M."/>
            <person name="Brannigan J.A."/>
            <person name="Brassat U."/>
            <person name="Wright M.H."/>
            <person name="Heal W.P."/>
            <person name="Wilkinson A.J."/>
            <person name="Mann D.J."/>
            <person name="Tate E.W."/>
        </authorList>
    </citation>
    <scope>MYRISTOYLATION AT GLY-2</scope>
    <scope>CLEAVAGE OF INITIATOR METHIONINE</scope>
    <scope>IDENTIFICATION BY MASS SPECTROMETRY</scope>
</reference>
<reference key="20">
    <citation type="journal article" date="2015" name="Elife">
        <title>QIL1 is a novel mitochondrial protein required for MICOS complex stability and cristae morphology.</title>
        <authorList>
            <person name="Guarani V."/>
            <person name="McNeill E.M."/>
            <person name="Paulo J.A."/>
            <person name="Huttlin E.L."/>
            <person name="Froehlich F."/>
            <person name="Gygi S.P."/>
            <person name="Van Vactor D."/>
            <person name="Harper J.W."/>
        </authorList>
    </citation>
    <scope>IDENTIFICATION IN THE MIB AND MICOS COMPLEX</scope>
    <scope>INTERACTION WITH IMMT</scope>
    <scope>SUBCELLULAR LOCATION</scope>
</reference>
<reference key="21">
    <citation type="journal article" date="2015" name="PLoS ONE">
        <title>Detailed analysis of the human mitochondrial contact site complex indicate a hierarchy of subunits.</title>
        <authorList>
            <person name="Ott C."/>
            <person name="Dorsch E."/>
            <person name="Fraunholz M."/>
            <person name="Straub S."/>
            <person name="Kozjak-Pavlovic V."/>
        </authorList>
    </citation>
    <scope>IDENTIFICATION IN THE MICOS COMPLEX</scope>
    <scope>FUNCTION</scope>
    <scope>SUBCELLULAR LOCATION</scope>
</reference>
<reference key="22">
    <citation type="journal article" date="2015" name="Proteomics">
        <title>N-terminome analysis of the human mitochondrial proteome.</title>
        <authorList>
            <person name="Vaca Jacome A.S."/>
            <person name="Rabilloud T."/>
            <person name="Schaeffer-Reiss C."/>
            <person name="Rompais M."/>
            <person name="Ayoub D."/>
            <person name="Lane L."/>
            <person name="Bairoch A."/>
            <person name="Van Dorsselaer A."/>
            <person name="Carapito C."/>
        </authorList>
    </citation>
    <scope>IDENTIFICATION BY MASS SPECTROMETRY [LARGE SCALE ANALYSIS]</scope>
</reference>
<reference key="23">
    <citation type="journal article" date="2020" name="Cell Death Dis.">
        <title>OPA1 and MICOS Regulate mitochondrial crista dynamics and formation.</title>
        <authorList>
            <person name="Hu C."/>
            <person name="Shu L."/>
            <person name="Huang X."/>
            <person name="Yu J."/>
            <person name="Li L."/>
            <person name="Gong L."/>
            <person name="Yang M."/>
            <person name="Wu Z."/>
            <person name="Gao Z."/>
            <person name="Zhao Y."/>
            <person name="Chen L."/>
            <person name="Song Z."/>
        </authorList>
    </citation>
    <scope>FUNCTION</scope>
</reference>
<reference key="24">
    <citation type="journal article" date="2020" name="EMBO J.">
        <title>MICOS assembly controls mitochondrial inner membrane remodeling and crista junction redistribution to mediate cristae formation.</title>
        <authorList>
            <person name="Stephan T."/>
            <person name="Brueser C."/>
            <person name="Deckers M."/>
            <person name="Steyer A.M."/>
            <person name="Balzarotti F."/>
            <person name="Barbot M."/>
            <person name="Behr T.S."/>
            <person name="Heim G."/>
            <person name="Huebner W."/>
            <person name="Ilgen P."/>
            <person name="Lange F."/>
            <person name="Pacheu-Grau D."/>
            <person name="Pape J.K."/>
            <person name="Stoldt S."/>
            <person name="Huser T."/>
            <person name="Hell S.W."/>
            <person name="Moebius W."/>
            <person name="Rehling P."/>
            <person name="Riedel D."/>
            <person name="Jakobs S."/>
        </authorList>
    </citation>
    <scope>FUNCTION</scope>
</reference>
<reference key="25">
    <citation type="journal article" date="2021" name="Proc. Natl. Acad. Sci. U.S.A.">
        <title>The human cytomegalovirus protein pUL13 targets mitochondrial cristae architecture to increase cellular respiration during infection.</title>
        <authorList>
            <person name="Betsinger C.N."/>
            <person name="Jankowski C.S.R."/>
            <person name="Hofstadter W.A."/>
            <person name="Federspiel J.D."/>
            <person name="Otter C.J."/>
            <person name="Jean Beltran P.M."/>
            <person name="Cristea I.M."/>
        </authorList>
    </citation>
    <scope>INTERACTION WITH HUMAN CYTOMEGALOVIRUS PROTEIN UL13 (MICROBIAL INFECTION)</scope>
</reference>
<dbReference type="EMBL" id="AK000427">
    <property type="protein sequence ID" value="BAA91157.1"/>
    <property type="molecule type" value="mRNA"/>
</dbReference>
<dbReference type="EMBL" id="BC011596">
    <property type="protein sequence ID" value="AAH11596.1"/>
    <property type="molecule type" value="mRNA"/>
</dbReference>
<dbReference type="EMBL" id="BC014839">
    <property type="protein sequence ID" value="AAH14839.1"/>
    <property type="molecule type" value="mRNA"/>
</dbReference>
<dbReference type="CCDS" id="CCDS5828.1"/>
<dbReference type="RefSeq" id="NP_001304106.1">
    <property type="nucleotide sequence ID" value="NM_001317177.1"/>
</dbReference>
<dbReference type="RefSeq" id="NP_060282.1">
    <property type="nucleotide sequence ID" value="NM_017812.4"/>
</dbReference>
<dbReference type="SMR" id="Q9NX63"/>
<dbReference type="BioGRID" id="120267">
    <property type="interactions" value="282"/>
</dbReference>
<dbReference type="ComplexPortal" id="CPX-6141">
    <property type="entry name" value="MICOS mitochondrial contact site and cristae organizing system complex"/>
</dbReference>
<dbReference type="CORUM" id="Q9NX63"/>
<dbReference type="FunCoup" id="Q9NX63">
    <property type="interactions" value="603"/>
</dbReference>
<dbReference type="IntAct" id="Q9NX63">
    <property type="interactions" value="162"/>
</dbReference>
<dbReference type="MINT" id="Q9NX63"/>
<dbReference type="STRING" id="9606.ENSP00000389297"/>
<dbReference type="ChEMBL" id="CHEMBL4105877"/>
<dbReference type="GlyCosmos" id="Q9NX63">
    <property type="glycosylation" value="1 site, 1 glycan"/>
</dbReference>
<dbReference type="GlyGen" id="Q9NX63">
    <property type="glycosylation" value="1 site, 1 O-linked glycan (1 site)"/>
</dbReference>
<dbReference type="iPTMnet" id="Q9NX63"/>
<dbReference type="PhosphoSitePlus" id="Q9NX63"/>
<dbReference type="SwissPalm" id="Q9NX63"/>
<dbReference type="BioMuta" id="CHCHD3"/>
<dbReference type="DMDM" id="62510520"/>
<dbReference type="REPRODUCTION-2DPAGE" id="IPI00015833"/>
<dbReference type="jPOST" id="Q9NX63"/>
<dbReference type="MassIVE" id="Q9NX63"/>
<dbReference type="PaxDb" id="9606-ENSP00000262570"/>
<dbReference type="PeptideAtlas" id="Q9NX63"/>
<dbReference type="ProteomicsDB" id="83048"/>
<dbReference type="Pumba" id="Q9NX63"/>
<dbReference type="TopDownProteomics" id="Q9NX63"/>
<dbReference type="Antibodypedia" id="32162">
    <property type="antibodies" value="302 antibodies from 32 providers"/>
</dbReference>
<dbReference type="DNASU" id="54927"/>
<dbReference type="Ensembl" id="ENST00000262570.10">
    <property type="protein sequence ID" value="ENSP00000262570.5"/>
    <property type="gene ID" value="ENSG00000106554.13"/>
</dbReference>
<dbReference type="GeneID" id="54927"/>
<dbReference type="KEGG" id="hsa:54927"/>
<dbReference type="MANE-Select" id="ENST00000262570.10">
    <property type="protein sequence ID" value="ENSP00000262570.5"/>
    <property type="RefSeq nucleotide sequence ID" value="NM_017812.4"/>
    <property type="RefSeq protein sequence ID" value="NP_060282.1"/>
</dbReference>
<dbReference type="UCSC" id="uc003vre.4">
    <property type="organism name" value="human"/>
</dbReference>
<dbReference type="AGR" id="HGNC:21906"/>
<dbReference type="CTD" id="54927"/>
<dbReference type="DisGeNET" id="54927"/>
<dbReference type="GeneCards" id="CHCHD3"/>
<dbReference type="HGNC" id="HGNC:21906">
    <property type="gene designation" value="CHCHD3"/>
</dbReference>
<dbReference type="HPA" id="ENSG00000106554">
    <property type="expression patterns" value="Group enriched (heart muscle, skeletal muscle, tongue)"/>
</dbReference>
<dbReference type="MIM" id="613748">
    <property type="type" value="gene"/>
</dbReference>
<dbReference type="neXtProt" id="NX_Q9NX63"/>
<dbReference type="OpenTargets" id="ENSG00000106554"/>
<dbReference type="PharmGKB" id="PA134983108"/>
<dbReference type="VEuPathDB" id="HostDB:ENSG00000106554"/>
<dbReference type="eggNOG" id="KOG4083">
    <property type="taxonomic scope" value="Eukaryota"/>
</dbReference>
<dbReference type="GeneTree" id="ENSGT00390000000903"/>
<dbReference type="HOGENOM" id="CLU_049040_2_1_1"/>
<dbReference type="InParanoid" id="Q9NX63"/>
<dbReference type="OrthoDB" id="9944291at2759"/>
<dbReference type="PAN-GO" id="Q9NX63">
    <property type="GO annotations" value="2 GO annotations based on evolutionary models"/>
</dbReference>
<dbReference type="PhylomeDB" id="Q9NX63"/>
<dbReference type="TreeFam" id="TF326279"/>
<dbReference type="PathwayCommons" id="Q9NX63"/>
<dbReference type="Reactome" id="R-HSA-1268020">
    <property type="pathway name" value="Mitochondrial protein import"/>
</dbReference>
<dbReference type="Reactome" id="R-HSA-8949613">
    <property type="pathway name" value="Cristae formation"/>
</dbReference>
<dbReference type="SignaLink" id="Q9NX63"/>
<dbReference type="SIGNOR" id="Q9NX63"/>
<dbReference type="BioGRID-ORCS" id="54927">
    <property type="hits" value="150 hits in 1158 CRISPR screens"/>
</dbReference>
<dbReference type="CD-CODE" id="DEE660B4">
    <property type="entry name" value="Stress granule"/>
</dbReference>
<dbReference type="CD-CODE" id="FB4E32DD">
    <property type="entry name" value="Presynaptic clusters and postsynaptic densities"/>
</dbReference>
<dbReference type="ChiTaRS" id="CHCHD3">
    <property type="organism name" value="human"/>
</dbReference>
<dbReference type="GenomeRNAi" id="54927"/>
<dbReference type="Pharos" id="Q9NX63">
    <property type="development level" value="Tbio"/>
</dbReference>
<dbReference type="PRO" id="PR:Q9NX63"/>
<dbReference type="Proteomes" id="UP000005640">
    <property type="component" value="Chromosome 7"/>
</dbReference>
<dbReference type="RNAct" id="Q9NX63">
    <property type="molecule type" value="protein"/>
</dbReference>
<dbReference type="Bgee" id="ENSG00000106554">
    <property type="expression patterns" value="Expressed in quadriceps femoris and 107 other cell types or tissues"/>
</dbReference>
<dbReference type="ExpressionAtlas" id="Q9NX63">
    <property type="expression patterns" value="baseline and differential"/>
</dbReference>
<dbReference type="GO" id="GO:0070062">
    <property type="term" value="C:extracellular exosome"/>
    <property type="evidence" value="ECO:0007005"/>
    <property type="project" value="UniProtKB"/>
</dbReference>
<dbReference type="GO" id="GO:0140275">
    <property type="term" value="C:MIB complex"/>
    <property type="evidence" value="ECO:0007005"/>
    <property type="project" value="UniProtKB"/>
</dbReference>
<dbReference type="GO" id="GO:0061617">
    <property type="term" value="C:MICOS complex"/>
    <property type="evidence" value="ECO:0000314"/>
    <property type="project" value="UniProtKB"/>
</dbReference>
<dbReference type="GO" id="GO:0044284">
    <property type="term" value="C:mitochondrial crista junction"/>
    <property type="evidence" value="ECO:0000303"/>
    <property type="project" value="ComplexPortal"/>
</dbReference>
<dbReference type="GO" id="GO:0005743">
    <property type="term" value="C:mitochondrial inner membrane"/>
    <property type="evidence" value="ECO:0000250"/>
    <property type="project" value="UniProtKB"/>
</dbReference>
<dbReference type="GO" id="GO:0005739">
    <property type="term" value="C:mitochondrion"/>
    <property type="evidence" value="ECO:0000314"/>
    <property type="project" value="UniProtKB"/>
</dbReference>
<dbReference type="GO" id="GO:0005634">
    <property type="term" value="C:nucleus"/>
    <property type="evidence" value="ECO:0007669"/>
    <property type="project" value="UniProtKB-SubCell"/>
</dbReference>
<dbReference type="GO" id="GO:0001401">
    <property type="term" value="C:SAM complex"/>
    <property type="evidence" value="ECO:0007005"/>
    <property type="project" value="UniProtKB"/>
</dbReference>
<dbReference type="GO" id="GO:0060090">
    <property type="term" value="F:molecular adaptor activity"/>
    <property type="evidence" value="ECO:0000250"/>
    <property type="project" value="UniProtKB"/>
</dbReference>
<dbReference type="GO" id="GO:0019902">
    <property type="term" value="F:phosphatase binding"/>
    <property type="evidence" value="ECO:0000314"/>
    <property type="project" value="UniProtKB"/>
</dbReference>
<dbReference type="GO" id="GO:0042407">
    <property type="term" value="P:cristae formation"/>
    <property type="evidence" value="ECO:0000315"/>
    <property type="project" value="UniProtKB"/>
</dbReference>
<dbReference type="GO" id="GO:0007007">
    <property type="term" value="P:inner mitochondrial membrane organization"/>
    <property type="evidence" value="ECO:0000315"/>
    <property type="project" value="UniProtKB"/>
</dbReference>
<dbReference type="GO" id="GO:0008053">
    <property type="term" value="P:mitochondrial fusion"/>
    <property type="evidence" value="ECO:0000315"/>
    <property type="project" value="UniProtKB"/>
</dbReference>
<dbReference type="InterPro" id="IPR007964">
    <property type="entry name" value="MIC19/MIC25"/>
</dbReference>
<dbReference type="InterPro" id="IPR052632">
    <property type="entry name" value="MICOS_subunit_Mic19"/>
</dbReference>
<dbReference type="PANTHER" id="PTHR21588">
    <property type="entry name" value="COILED-COIL-HELIX-COILED-COIL-HELIX DOMAIN CONTAINING 6"/>
    <property type="match status" value="1"/>
</dbReference>
<dbReference type="PANTHER" id="PTHR21588:SF22">
    <property type="entry name" value="MICOS COMPLEX SUBUNIT MIC19"/>
    <property type="match status" value="1"/>
</dbReference>
<dbReference type="Pfam" id="PF05300">
    <property type="entry name" value="MIC19_MIC25"/>
    <property type="match status" value="1"/>
</dbReference>
<dbReference type="PROSITE" id="PS51808">
    <property type="entry name" value="CHCH"/>
    <property type="match status" value="1"/>
</dbReference>
<sequence length="227" mass="26152">MGGTTSTRRVTFEADENENITVVKGIRLSENVIDRMKESSPSGSKSQRYSGAYGASVSDEELKRRVAEELALEQAKKESEDQKRLKQAKELDRERAAANEQLTRAILRERICSEEERAKAKHLARQLEEKDRVLKKQDAFYKEQLARLEERSSEFYRVTTEQYQKAAEEVEAKFKRYESHPVCADLQAKILQCYRENTHQTLKCSALATQYMHCVNHAKQSMLEKGG</sequence>
<feature type="initiator methionine" description="Removed" evidence="9">
    <location>
        <position position="1"/>
    </location>
</feature>
<feature type="chain" id="PRO_0000129163" description="MICOS complex subunit MIC19">
    <location>
        <begin position="2"/>
        <end position="227"/>
    </location>
</feature>
<feature type="domain" description="CHCH" evidence="2">
    <location>
        <begin position="180"/>
        <end position="222"/>
    </location>
</feature>
<feature type="region of interest" description="Disordered" evidence="3">
    <location>
        <begin position="34"/>
        <end position="61"/>
    </location>
</feature>
<feature type="region of interest" description="Disordered" evidence="3">
    <location>
        <begin position="73"/>
        <end position="92"/>
    </location>
</feature>
<feature type="short sequence motif" description="Cx9C motif 1" evidence="2">
    <location>
        <begin position="183"/>
        <end position="193"/>
    </location>
</feature>
<feature type="short sequence motif" description="Cx9C motif 2" evidence="2">
    <location>
        <begin position="204"/>
        <end position="214"/>
    </location>
</feature>
<feature type="compositionally biased region" description="Polar residues" evidence="3">
    <location>
        <begin position="39"/>
        <end position="49"/>
    </location>
</feature>
<feature type="modified residue" description="Phosphoserine" evidence="21">
    <location>
        <position position="29"/>
    </location>
</feature>
<feature type="modified residue" description="Phosphotyrosine" evidence="18 21">
    <location>
        <position position="49"/>
    </location>
</feature>
<feature type="modified residue" description="Phosphoserine" evidence="16 18 19 20 21">
    <location>
        <position position="50"/>
    </location>
</feature>
<feature type="modified residue" description="Phosphoserine" evidence="1">
    <location>
        <position position="56"/>
    </location>
</feature>
<feature type="modified residue" description="Phosphoserine" evidence="21">
    <location>
        <position position="58"/>
    </location>
</feature>
<feature type="modified residue" description="N6-acetyllysine" evidence="17">
    <location>
        <position position="142"/>
    </location>
</feature>
<feature type="lipid moiety-binding region" description="N-myristoyl glycine" evidence="9">
    <location>
        <position position="2"/>
    </location>
</feature>
<feature type="disulfide bond" evidence="2">
    <location>
        <begin position="183"/>
        <end position="214"/>
    </location>
</feature>
<feature type="disulfide bond" evidence="2">
    <location>
        <begin position="193"/>
        <end position="204"/>
    </location>
</feature>
<proteinExistence type="evidence at protein level"/>
<comment type="function">
    <text evidence="8 10 12 13">Component of the MICOS complex, a large protein complex of the mitochondrial inner membrane that plays crucial roles in the maintenance of crista junctions, inner membrane architecture, and formation of contact sites to the outer membrane (PubMed:25781180, PubMed:32567732, PubMed:33130824). Plays an important role in the maintenance of the MICOS complex stability and the mitochondrial cristae morphology (PubMed:25781180, PubMed:32567732, PubMed:33130824). Has also been shown to function as a transcription factor which binds to the BAG1 promoter and represses BAG1 transcription (PubMed:22567091).</text>
</comment>
<comment type="subunit">
    <text evidence="1 4 5 6 7 10 11">Component of the mitochondrial contact site and cristae organizing system (MICOS) complex, composed of at least MICOS10/MIC10, CHCHD3/MIC19, CHCHD6/MIC25, APOOL/MIC27, IMMT/MIC60, APOO/MIC23/MIC26 and MICOS13/MIC13 (PubMed:21081504, PubMed:22114354, PubMed:22228767, PubMed:25997101). This complex was also known under the names MINOS or MitOS complex. The MICOS complex associates with mitochondrial outer membrane proteins SAMM50, MTX1 and MTX2 (together described as components of the mitochondrial outer membrane sorting assembly machinery (SAM) complex) and DNAJC11, mitochondrial inner membrane protein TMEM11 and with HSPA9 (PubMed:21081504, PubMed:22114354, PubMed:22228767, PubMed:25997101). The MICOS and SAM complexes together with DNAJC11 are part of a large protein complex spanning both membranes termed the mitochondrial intermembrane space bridging (MIB) complex. Interacts with HSPA1A/HSPA1B and OPA1, preferentially with the soluble OPA1 form (By similarity). Interacts with IMMT/MIC60.</text>
</comment>
<comment type="subunit">
    <text evidence="14">(Microbial infection) Interacts with human cytomegalovirus protein UL13; this interaction alters cristae architecture.</text>
</comment>
<comment type="interaction">
    <interactant intactId="EBI-743375">
        <id>Q9NX63</id>
    </interactant>
    <interactant intactId="EBI-11954519">
        <id>Q49AR9</id>
        <label>ANKS1A</label>
    </interactant>
    <organismsDiffer>false</organismsDiffer>
    <experiments>3</experiments>
</comment>
<comment type="interaction">
    <interactant intactId="EBI-743375">
        <id>Q9NX63</id>
    </interactant>
    <interactant intactId="EBI-742909">
        <id>Q9H6L4</id>
        <label>ARMC7</label>
    </interactant>
    <organismsDiffer>false</organismsDiffer>
    <experiments>3</experiments>
</comment>
<comment type="interaction">
    <interactant intactId="EBI-743375">
        <id>Q9NX63</id>
    </interactant>
    <interactant intactId="EBI-2548012">
        <id>Q9H2G9</id>
        <label>BLZF1</label>
    </interactant>
    <organismsDiffer>false</organismsDiffer>
    <experiments>6</experiments>
</comment>
<comment type="interaction">
    <interactant intactId="EBI-743375">
        <id>Q9NX63</id>
    </interactant>
    <interactant intactId="EBI-739879">
        <id>Q53TS8</id>
        <label>C2CD6</label>
    </interactant>
    <organismsDiffer>false</organismsDiffer>
    <experiments>3</experiments>
</comment>
<comment type="interaction">
    <interactant intactId="EBI-743375">
        <id>Q9NX63</id>
    </interactant>
    <interactant intactId="EBI-739580">
        <id>Q13137</id>
        <label>CALCOCO2</label>
    </interactant>
    <organismsDiffer>false</organismsDiffer>
    <experiments>3</experiments>
</comment>
<comment type="interaction">
    <interactant intactId="EBI-743375">
        <id>Q9NX63</id>
    </interactant>
    <interactant intactId="EBI-741724">
        <id>Q8NA61</id>
        <label>CBY2</label>
    </interactant>
    <organismsDiffer>false</organismsDiffer>
    <experiments>3</experiments>
</comment>
<comment type="interaction">
    <interactant intactId="EBI-743375">
        <id>Q9NX63</id>
    </interactant>
    <interactant intactId="EBI-739674">
        <id>Q15834</id>
        <label>CCDC85B</label>
    </interactant>
    <organismsDiffer>false</organismsDiffer>
    <experiments>2</experiments>
</comment>
<comment type="interaction">
    <interactant intactId="EBI-743375">
        <id>Q9NX63</id>
    </interactant>
    <interactant intactId="EBI-739498">
        <id>Q9P209</id>
        <label>CEP72</label>
    </interactant>
    <organismsDiffer>false</organismsDiffer>
    <experiments>3</experiments>
</comment>
<comment type="interaction">
    <interactant intactId="EBI-743375">
        <id>Q9NX63</id>
    </interactant>
    <interactant intactId="EBI-2557895">
        <id>Q9BRQ6</id>
        <label>CHCHD6</label>
    </interactant>
    <organismsDiffer>false</organismsDiffer>
    <experiments>2</experiments>
</comment>
<comment type="interaction">
    <interactant intactId="EBI-743375">
        <id>Q9NX63</id>
    </interactant>
    <interactant intactId="EBI-3867333">
        <id>A8MQ03</id>
        <label>CYSRT1</label>
    </interactant>
    <organismsDiffer>false</organismsDiffer>
    <experiments>6</experiments>
</comment>
<comment type="interaction">
    <interactant intactId="EBI-743375">
        <id>Q9NX63</id>
    </interactant>
    <interactant intactId="EBI-743105">
        <id>Q5JVL4</id>
        <label>EFHC1</label>
    </interactant>
    <organismsDiffer>false</organismsDiffer>
    <experiments>3</experiments>
</comment>
<comment type="interaction">
    <interactant intactId="EBI-743375">
        <id>Q9NX63</id>
    </interactant>
    <interactant intactId="EBI-744099">
        <id>Q9H0I2</id>
        <label>ENKD1</label>
    </interactant>
    <organismsDiffer>false</organismsDiffer>
    <experiments>3</experiments>
</comment>
<comment type="interaction">
    <interactant intactId="EBI-743375">
        <id>Q9NX63</id>
    </interactant>
    <interactant intactId="EBI-2339898">
        <id>Q9NW38</id>
        <label>FANCL</label>
    </interactant>
    <organismsDiffer>false</organismsDiffer>
    <experiments>6</experiments>
</comment>
<comment type="interaction">
    <interactant intactId="EBI-743375">
        <id>Q9NX63</id>
    </interactant>
    <interactant intactId="EBI-745707">
        <id>Q8NEA9</id>
        <label>GMCL2</label>
    </interactant>
    <organismsDiffer>false</organismsDiffer>
    <experiments>3</experiments>
</comment>
<comment type="interaction">
    <interactant intactId="EBI-743375">
        <id>Q9NX63</id>
    </interactant>
    <interactant intactId="EBI-618309">
        <id>Q08379</id>
        <label>GOLGA2</label>
    </interactant>
    <organismsDiffer>false</organismsDiffer>
    <experiments>3</experiments>
</comment>
<comment type="interaction">
    <interactant intactId="EBI-743375">
        <id>Q9NX63</id>
    </interactant>
    <interactant intactId="EBI-466029">
        <id>P42858</id>
        <label>HTT</label>
    </interactant>
    <organismsDiffer>false</organismsDiffer>
    <experiments>6</experiments>
</comment>
<comment type="interaction">
    <interactant intactId="EBI-743375">
        <id>Q9NX63</id>
    </interactant>
    <interactant intactId="EBI-2556193">
        <id>Q63ZY3</id>
        <label>KANK2</label>
    </interactant>
    <organismsDiffer>false</organismsDiffer>
    <experiments>3</experiments>
</comment>
<comment type="interaction">
    <interactant intactId="EBI-743375">
        <id>Q9NX63</id>
    </interactant>
    <interactant intactId="EBI-399080">
        <id>Q92993</id>
        <label>KAT5</label>
    </interactant>
    <organismsDiffer>false</organismsDiffer>
    <experiments>3</experiments>
</comment>
<comment type="interaction">
    <interactant intactId="EBI-743375">
        <id>Q9NX63</id>
    </interactant>
    <interactant intactId="EBI-10171697">
        <id>Q6A162</id>
        <label>KRT40</label>
    </interactant>
    <organismsDiffer>false</organismsDiffer>
    <experiments>3</experiments>
</comment>
<comment type="interaction">
    <interactant intactId="EBI-743375">
        <id>Q9NX63</id>
    </interactant>
    <interactant intactId="EBI-8639312">
        <id>P25800</id>
        <label>LMO1</label>
    </interactant>
    <organismsDiffer>false</organismsDiffer>
    <experiments>3</experiments>
</comment>
<comment type="interaction">
    <interactant intactId="EBI-743375">
        <id>Q9NX63</id>
    </interactant>
    <interactant intactId="EBI-11742507">
        <id>Q8TAP4-4</id>
        <label>LMO3</label>
    </interactant>
    <organismsDiffer>false</organismsDiffer>
    <experiments>3</experiments>
</comment>
<comment type="interaction">
    <interactant intactId="EBI-743375">
        <id>Q9NX63</id>
    </interactant>
    <interactant intactId="EBI-741037">
        <id>Q9BRK4</id>
        <label>LZTS2</label>
    </interactant>
    <organismsDiffer>false</organismsDiffer>
    <experiments>3</experiments>
</comment>
<comment type="interaction">
    <interactant intactId="EBI-743375">
        <id>Q9NX63</id>
    </interactant>
    <interactant intactId="EBI-945833">
        <id>Q7Z3S9</id>
        <label>NOTCH2NLA</label>
    </interactant>
    <organismsDiffer>false</organismsDiffer>
    <experiments>3</experiments>
</comment>
<comment type="interaction">
    <interactant intactId="EBI-743375">
        <id>Q9NX63</id>
    </interactant>
    <interactant intactId="EBI-22310682">
        <id>P0DPK4</id>
        <label>NOTCH2NLC</label>
    </interactant>
    <organismsDiffer>false</organismsDiffer>
    <experiments>3</experiments>
</comment>
<comment type="interaction">
    <interactant intactId="EBI-743375">
        <id>Q9NX63</id>
    </interactant>
    <interactant intactId="EBI-741158">
        <id>Q96HA8</id>
        <label>NTAQ1</label>
    </interactant>
    <organismsDiffer>false</organismsDiffer>
    <experiments>3</experiments>
</comment>
<comment type="interaction">
    <interactant intactId="EBI-743375">
        <id>Q9NX63</id>
    </interactant>
    <interactant intactId="EBI-591778">
        <id>P61970</id>
        <label>NUTF2</label>
    </interactant>
    <organismsDiffer>false</organismsDiffer>
    <experiments>3</experiments>
</comment>
<comment type="interaction">
    <interactant intactId="EBI-743375">
        <id>Q9NX63</id>
    </interactant>
    <interactant intactId="EBI-1105124">
        <id>Q5VU43</id>
        <label>PDE4DIP</label>
    </interactant>
    <organismsDiffer>false</organismsDiffer>
    <experiments>3</experiments>
</comment>
<comment type="interaction">
    <interactant intactId="EBI-743375">
        <id>Q9NX63</id>
    </interactant>
    <interactant intactId="EBI-357253">
        <id>P62136</id>
        <label>PPP1CA</label>
    </interactant>
    <organismsDiffer>false</organismsDiffer>
    <experiments>2</experiments>
</comment>
<comment type="interaction">
    <interactant intactId="EBI-743375">
        <id>Q9NX63</id>
    </interactant>
    <interactant intactId="EBI-352350">
        <id>P62140</id>
        <label>PPP1CB</label>
    </interactant>
    <organismsDiffer>false</organismsDiffer>
    <experiments>3</experiments>
</comment>
<comment type="interaction">
    <interactant intactId="EBI-743375">
        <id>Q9NX63</id>
    </interactant>
    <interactant intactId="EBI-747844">
        <id>Q96QF0</id>
        <label>RAB3IP</label>
    </interactant>
    <organismsDiffer>false</organismsDiffer>
    <experiments>3</experiments>
</comment>
<comment type="interaction">
    <interactant intactId="EBI-743375">
        <id>Q9NX63</id>
    </interactant>
    <interactant intactId="EBI-1050213">
        <id>Q96KN7</id>
        <label>RPGRIP1</label>
    </interactant>
    <organismsDiffer>false</organismsDiffer>
    <experiments>3</experiments>
</comment>
<comment type="interaction">
    <interactant intactId="EBI-743375">
        <id>Q9NX63</id>
    </interactant>
    <interactant intactId="EBI-748409">
        <id>Q9Y512</id>
        <label>SAMM50</label>
    </interactant>
    <organismsDiffer>false</organismsDiffer>
    <experiments>7</experiments>
</comment>
<comment type="interaction">
    <interactant intactId="EBI-743375">
        <id>Q9NX63</id>
    </interactant>
    <interactant intactId="EBI-9090795">
        <id>Q15047-2</id>
        <label>SETDB1</label>
    </interactant>
    <organismsDiffer>false</organismsDiffer>
    <experiments>3</experiments>
</comment>
<comment type="interaction">
    <interactant intactId="EBI-743375">
        <id>Q9NX63</id>
    </interactant>
    <interactant intactId="EBI-1752330">
        <id>Q9BYB0</id>
        <label>SHANK3</label>
    </interactant>
    <organismsDiffer>false</organismsDiffer>
    <experiments>2</experiments>
</comment>
<comment type="interaction">
    <interactant intactId="EBI-743375">
        <id>Q9NX63</id>
    </interactant>
    <interactant intactId="EBI-413317">
        <id>Q96R06</id>
        <label>SPAG5</label>
    </interactant>
    <organismsDiffer>false</organismsDiffer>
    <experiments>3</experiments>
</comment>
<comment type="interaction">
    <interactant intactId="EBI-743375">
        <id>Q9NX63</id>
    </interactant>
    <interactant intactId="EBI-2212028">
        <id>Q9Y2D8</id>
        <label>SSX2IP</label>
    </interactant>
    <organismsDiffer>false</organismsDiffer>
    <experiments>3</experiments>
</comment>
<comment type="interaction">
    <interactant intactId="EBI-743375">
        <id>Q9NX63</id>
    </interactant>
    <interactant intactId="EBI-359224">
        <id>Q13077</id>
        <label>TRAF1</label>
    </interactant>
    <organismsDiffer>false</organismsDiffer>
    <experiments>3</experiments>
</comment>
<comment type="interaction">
    <interactant intactId="EBI-743375">
        <id>Q9NX63</id>
    </interactant>
    <interactant intactId="EBI-719493">
        <id>P14373</id>
        <label>TRIM27</label>
    </interactant>
    <organismsDiffer>false</organismsDiffer>
    <experiments>3</experiments>
</comment>
<comment type="interaction">
    <interactant intactId="EBI-743375">
        <id>Q9NX63</id>
    </interactant>
    <interactant intactId="EBI-720609">
        <id>O76024</id>
        <label>WFS1</label>
    </interactant>
    <organismsDiffer>false</organismsDiffer>
    <experiments>3</experiments>
</comment>
<comment type="interaction">
    <interactant intactId="EBI-743375">
        <id>Q9NX63</id>
    </interactant>
    <interactant intactId="EBI-359832">
        <id>P61981</id>
        <label>YWHAG</label>
    </interactant>
    <organismsDiffer>false</organismsDiffer>
    <experiments>3</experiments>
</comment>
<comment type="subcellular location">
    <subcellularLocation>
        <location evidence="1">Mitochondrion inner membrane</location>
        <topology evidence="15">Lipid-anchor</topology>
        <orientation evidence="1">Intermembrane side</orientation>
    </subcellularLocation>
    <subcellularLocation>
        <location evidence="8">Cytoplasm</location>
    </subcellularLocation>
    <subcellularLocation>
        <location evidence="8">Nucleus</location>
    </subcellularLocation>
    <subcellularLocation>
        <location evidence="10 11">Mitochondrion</location>
    </subcellularLocation>
</comment>
<comment type="tissue specificity">
    <text evidence="8">Detected at low levels in brain, placenta, lung, liver, kidney and pancreas with increased levels in heart and skeletal muscle. Higher expression in primary lung cancers than in normal lung tissue.</text>
</comment>
<comment type="similarity">
    <text evidence="15">Belongs to the MICOS complex subunit Mic19 family. Metazoan Mic19 subfamily.</text>
</comment>
<evidence type="ECO:0000250" key="1">
    <source>
        <dbReference type="UniProtKB" id="Q9CRB9"/>
    </source>
</evidence>
<evidence type="ECO:0000255" key="2">
    <source>
        <dbReference type="PROSITE-ProRule" id="PRU01150"/>
    </source>
</evidence>
<evidence type="ECO:0000256" key="3">
    <source>
        <dbReference type="SAM" id="MobiDB-lite"/>
    </source>
</evidence>
<evidence type="ECO:0000269" key="4">
    <source>
    </source>
</evidence>
<evidence type="ECO:0000269" key="5">
    <source>
    </source>
</evidence>
<evidence type="ECO:0000269" key="6">
    <source>
    </source>
</evidence>
<evidence type="ECO:0000269" key="7">
    <source>
    </source>
</evidence>
<evidence type="ECO:0000269" key="8">
    <source>
    </source>
</evidence>
<evidence type="ECO:0000269" key="9">
    <source>
    </source>
</evidence>
<evidence type="ECO:0000269" key="10">
    <source>
    </source>
</evidence>
<evidence type="ECO:0000269" key="11">
    <source>
    </source>
</evidence>
<evidence type="ECO:0000269" key="12">
    <source>
    </source>
</evidence>
<evidence type="ECO:0000269" key="13">
    <source>
    </source>
</evidence>
<evidence type="ECO:0000269" key="14">
    <source>
    </source>
</evidence>
<evidence type="ECO:0000305" key="15"/>
<evidence type="ECO:0007744" key="16">
    <source>
    </source>
</evidence>
<evidence type="ECO:0007744" key="17">
    <source>
    </source>
</evidence>
<evidence type="ECO:0007744" key="18">
    <source>
    </source>
</evidence>
<evidence type="ECO:0007744" key="19">
    <source>
    </source>
</evidence>
<evidence type="ECO:0007744" key="20">
    <source>
    </source>
</evidence>
<evidence type="ECO:0007744" key="21">
    <source>
    </source>
</evidence>
<gene>
    <name type="primary">CHCHD3</name>
    <name type="synonym">MIC19</name>
    <name type="synonym">MINOS3</name>
</gene>